<organism>
    <name type="scientific">Arabidopsis thaliana</name>
    <name type="common">Mouse-ear cress</name>
    <dbReference type="NCBI Taxonomy" id="3702"/>
    <lineage>
        <taxon>Eukaryota</taxon>
        <taxon>Viridiplantae</taxon>
        <taxon>Streptophyta</taxon>
        <taxon>Embryophyta</taxon>
        <taxon>Tracheophyta</taxon>
        <taxon>Spermatophyta</taxon>
        <taxon>Magnoliopsida</taxon>
        <taxon>eudicotyledons</taxon>
        <taxon>Gunneridae</taxon>
        <taxon>Pentapetalae</taxon>
        <taxon>rosids</taxon>
        <taxon>malvids</taxon>
        <taxon>Brassicales</taxon>
        <taxon>Brassicaceae</taxon>
        <taxon>Camelineae</taxon>
        <taxon>Arabidopsis</taxon>
    </lineage>
</organism>
<protein>
    <recommendedName>
        <fullName evidence="5">Remorin 1.4</fullName>
        <shortName evidence="4">AtREM1.4</shortName>
    </recommendedName>
    <alternativeName>
        <fullName evidence="5">Remorin group 1 member 4</fullName>
    </alternativeName>
</protein>
<accession>Q9FFA5</accession>
<accession>F4KEA0</accession>
<accession>Q8LC13</accession>
<proteinExistence type="evidence at protein level"/>
<reference key="1">
    <citation type="journal article" date="1997" name="DNA Res.">
        <title>Structural analysis of Arabidopsis thaliana chromosome 5. I. Sequence features of the 1.6 Mb regions covered by twenty physically assigned P1 clones.</title>
        <authorList>
            <person name="Sato S."/>
            <person name="Kotani H."/>
            <person name="Nakamura Y."/>
            <person name="Kaneko T."/>
            <person name="Asamizu E."/>
            <person name="Fukami M."/>
            <person name="Miyajima N."/>
            <person name="Tabata S."/>
        </authorList>
    </citation>
    <scope>NUCLEOTIDE SEQUENCE [LARGE SCALE GENOMIC DNA]</scope>
    <source>
        <strain>cv. Columbia</strain>
    </source>
</reference>
<reference key="2">
    <citation type="journal article" date="2017" name="Plant J.">
        <title>Araport11: a complete reannotation of the Arabidopsis thaliana reference genome.</title>
        <authorList>
            <person name="Cheng C.Y."/>
            <person name="Krishnakumar V."/>
            <person name="Chan A.P."/>
            <person name="Thibaud-Nissen F."/>
            <person name="Schobel S."/>
            <person name="Town C.D."/>
        </authorList>
    </citation>
    <scope>GENOME REANNOTATION</scope>
    <source>
        <strain>cv. Columbia</strain>
    </source>
</reference>
<reference key="3">
    <citation type="journal article" date="2003" name="Science">
        <title>Empirical analysis of transcriptional activity in the Arabidopsis genome.</title>
        <authorList>
            <person name="Yamada K."/>
            <person name="Lim J."/>
            <person name="Dale J.M."/>
            <person name="Chen H."/>
            <person name="Shinn P."/>
            <person name="Palm C.J."/>
            <person name="Southwick A.M."/>
            <person name="Wu H.C."/>
            <person name="Kim C.J."/>
            <person name="Nguyen M."/>
            <person name="Pham P.K."/>
            <person name="Cheuk R.F."/>
            <person name="Karlin-Newmann G."/>
            <person name="Liu S.X."/>
            <person name="Lam B."/>
            <person name="Sakano H."/>
            <person name="Wu T."/>
            <person name="Yu G."/>
            <person name="Miranda M."/>
            <person name="Quach H.L."/>
            <person name="Tripp M."/>
            <person name="Chang C.H."/>
            <person name="Lee J.M."/>
            <person name="Toriumi M.J."/>
            <person name="Chan M.M."/>
            <person name="Tang C.C."/>
            <person name="Onodera C.S."/>
            <person name="Deng J.M."/>
            <person name="Akiyama K."/>
            <person name="Ansari Y."/>
            <person name="Arakawa T."/>
            <person name="Banh J."/>
            <person name="Banno F."/>
            <person name="Bowser L."/>
            <person name="Brooks S.Y."/>
            <person name="Carninci P."/>
            <person name="Chao Q."/>
            <person name="Choy N."/>
            <person name="Enju A."/>
            <person name="Goldsmith A.D."/>
            <person name="Gurjal M."/>
            <person name="Hansen N.F."/>
            <person name="Hayashizaki Y."/>
            <person name="Johnson-Hopson C."/>
            <person name="Hsuan V.W."/>
            <person name="Iida K."/>
            <person name="Karnes M."/>
            <person name="Khan S."/>
            <person name="Koesema E."/>
            <person name="Ishida J."/>
            <person name="Jiang P.X."/>
            <person name="Jones T."/>
            <person name="Kawai J."/>
            <person name="Kamiya A."/>
            <person name="Meyers C."/>
            <person name="Nakajima M."/>
            <person name="Narusaka M."/>
            <person name="Seki M."/>
            <person name="Sakurai T."/>
            <person name="Satou M."/>
            <person name="Tamse R."/>
            <person name="Vaysberg M."/>
            <person name="Wallender E.K."/>
            <person name="Wong C."/>
            <person name="Yamamura Y."/>
            <person name="Yuan S."/>
            <person name="Shinozaki K."/>
            <person name="Davis R.W."/>
            <person name="Theologis A."/>
            <person name="Ecker J.R."/>
        </authorList>
    </citation>
    <scope>NUCLEOTIDE SEQUENCE [LARGE SCALE MRNA] (ISOFORM 1)</scope>
    <source>
        <strain>cv. Columbia</strain>
    </source>
</reference>
<reference key="4">
    <citation type="submission" date="2002-03" db="EMBL/GenBank/DDBJ databases">
        <title>Full-length cDNA from Arabidopsis thaliana.</title>
        <authorList>
            <person name="Brover V.V."/>
            <person name="Troukhan M.E."/>
            <person name="Alexandrov N.A."/>
            <person name="Lu Y.-P."/>
            <person name="Flavell R.B."/>
            <person name="Feldmann K.A."/>
        </authorList>
    </citation>
    <scope>NUCLEOTIDE SEQUENCE [LARGE SCALE MRNA] (ISOFORM 1)</scope>
</reference>
<reference key="5">
    <citation type="journal article" date="2007" name="Plant Physiol.">
        <title>Genome-wide annotation of remorins, a plant-specific protein family: evolutionary and functional perspectives.</title>
        <authorList>
            <person name="Raffaele S."/>
            <person name="Mongrand S."/>
            <person name="Gamas P."/>
            <person name="Niebel A."/>
            <person name="Ott T."/>
        </authorList>
    </citation>
    <scope>GENE FAMILY</scope>
</reference>
<reference key="6">
    <citation type="journal article" date="2014" name="Plant Pathol. J.">
        <title>Arabidopsis thaliana remorins interact with SnRK1 and play a role in susceptibility to Beet Curly Top Virus and Beet Severe Curly Top Virus.</title>
        <authorList>
            <person name="Son S."/>
            <person name="Oh C.J."/>
            <person name="An C.S."/>
        </authorList>
    </citation>
    <scope>INDUCTION</scope>
</reference>
<keyword id="KW-0025">Alternative splicing</keyword>
<keyword id="KW-0175">Coiled coil</keyword>
<keyword id="KW-1185">Reference proteome</keyword>
<sequence>MAEEEPKKVTETVSEPTPTPEVPVEKPAAAADVAPQEKPVAPPPVLPSPAPAEEKQEDSKAIVPVVPKEVEEEKKEGSVNRDAVLARVETEKRMSLIKAWEEAEKCKVENKAEKKLSSIGSWENNKKAAVEAELKKMEEQLEKKKAEYVEQMKNKIAQIHKEAEEKRAMIEAKRGEEILKAEELAAKYRATGTAPKKLFGCM</sequence>
<evidence type="ECO:0000255" key="1"/>
<evidence type="ECO:0000256" key="2">
    <source>
        <dbReference type="SAM" id="MobiDB-lite"/>
    </source>
</evidence>
<evidence type="ECO:0000269" key="3">
    <source>
    </source>
</evidence>
<evidence type="ECO:0000303" key="4">
    <source>
    </source>
</evidence>
<evidence type="ECO:0000305" key="5"/>
<evidence type="ECO:0000312" key="6">
    <source>
        <dbReference type="Araport" id="AT5G23750"/>
    </source>
</evidence>
<evidence type="ECO:0000312" key="7">
    <source>
        <dbReference type="EMBL" id="BAB10048.1"/>
    </source>
</evidence>
<name>RMR14_ARATH</name>
<comment type="interaction">
    <interactant intactId="EBI-4465086">
        <id>Q9FFA5</id>
    </interactant>
    <interactant intactId="EBI-1788073">
        <id>O80837</id>
        <label>DBP</label>
    </interactant>
    <organismsDiffer>false</organismsDiffer>
    <experiments>6</experiments>
</comment>
<comment type="alternative products">
    <event type="alternative splicing"/>
    <isoform>
        <id>Q9FFA5-1</id>
        <name>1</name>
        <sequence type="displayed"/>
    </isoform>
    <isoform>
        <id>Q9FFA5-2</id>
        <name>2</name>
        <sequence type="described" ref="VSP_059892"/>
    </isoform>
</comment>
<comment type="induction">
    <text evidence="3">Induced by mannitol and NaCl.</text>
</comment>
<comment type="similarity">
    <text evidence="5">Belongs to the remorin family.</text>
</comment>
<dbReference type="EMBL" id="AB005244">
    <property type="protein sequence ID" value="BAB10048.1"/>
    <property type="molecule type" value="Genomic_DNA"/>
</dbReference>
<dbReference type="EMBL" id="CP002688">
    <property type="protein sequence ID" value="AED93207.1"/>
    <property type="molecule type" value="Genomic_DNA"/>
</dbReference>
<dbReference type="EMBL" id="CP002688">
    <property type="protein sequence ID" value="AED93208.1"/>
    <property type="molecule type" value="Genomic_DNA"/>
</dbReference>
<dbReference type="EMBL" id="AF387006">
    <property type="protein sequence ID" value="AAK62451.1"/>
    <property type="molecule type" value="mRNA"/>
</dbReference>
<dbReference type="EMBL" id="BT000016">
    <property type="protein sequence ID" value="AAN15335.1"/>
    <property type="molecule type" value="mRNA"/>
</dbReference>
<dbReference type="EMBL" id="AY086863">
    <property type="protein sequence ID" value="AAM63910.1"/>
    <property type="molecule type" value="mRNA"/>
</dbReference>
<dbReference type="RefSeq" id="NP_197764.1">
    <molecule id="Q9FFA5-1"/>
    <property type="nucleotide sequence ID" value="NM_122280.4"/>
</dbReference>
<dbReference type="RefSeq" id="NP_974824.1">
    <molecule id="Q9FFA5-2"/>
    <property type="nucleotide sequence ID" value="NM_203095.2"/>
</dbReference>
<dbReference type="SMR" id="Q9FFA5"/>
<dbReference type="IntAct" id="Q9FFA5">
    <property type="interactions" value="1"/>
</dbReference>
<dbReference type="STRING" id="3702.Q9FFA5"/>
<dbReference type="GlyGen" id="Q9FFA5">
    <property type="glycosylation" value="1 site"/>
</dbReference>
<dbReference type="iPTMnet" id="Q9FFA5"/>
<dbReference type="PaxDb" id="3702-AT5G23750.1"/>
<dbReference type="ProteomicsDB" id="228119">
    <molecule id="Q9FFA5-1"/>
</dbReference>
<dbReference type="EnsemblPlants" id="AT5G23750.1">
    <molecule id="Q9FFA5-1"/>
    <property type="protein sequence ID" value="AT5G23750.1"/>
    <property type="gene ID" value="AT5G23750"/>
</dbReference>
<dbReference type="EnsemblPlants" id="AT5G23750.2">
    <molecule id="Q9FFA5-2"/>
    <property type="protein sequence ID" value="AT5G23750.2"/>
    <property type="gene ID" value="AT5G23750"/>
</dbReference>
<dbReference type="GeneID" id="832440"/>
<dbReference type="Gramene" id="AT5G23750.1">
    <molecule id="Q9FFA5-1"/>
    <property type="protein sequence ID" value="AT5G23750.1"/>
    <property type="gene ID" value="AT5G23750"/>
</dbReference>
<dbReference type="Gramene" id="AT5G23750.2">
    <molecule id="Q9FFA5-2"/>
    <property type="protein sequence ID" value="AT5G23750.2"/>
    <property type="gene ID" value="AT5G23750"/>
</dbReference>
<dbReference type="KEGG" id="ath:AT5G23750"/>
<dbReference type="Araport" id="AT5G23750"/>
<dbReference type="TAIR" id="AT5G23750"/>
<dbReference type="HOGENOM" id="CLU_088771_1_1_1"/>
<dbReference type="InParanoid" id="Q9FFA5"/>
<dbReference type="OMA" id="MAWHEAM"/>
<dbReference type="PhylomeDB" id="Q9FFA5"/>
<dbReference type="PRO" id="PR:Q9FFA5"/>
<dbReference type="Proteomes" id="UP000006548">
    <property type="component" value="Chromosome 5"/>
</dbReference>
<dbReference type="ExpressionAtlas" id="Q9FFA5">
    <property type="expression patterns" value="baseline and differential"/>
</dbReference>
<dbReference type="GO" id="GO:0009536">
    <property type="term" value="C:plastid"/>
    <property type="evidence" value="ECO:0007005"/>
    <property type="project" value="TAIR"/>
</dbReference>
<dbReference type="GO" id="GO:0010555">
    <property type="term" value="P:response to mannitol"/>
    <property type="evidence" value="ECO:0000270"/>
    <property type="project" value="UniProtKB"/>
</dbReference>
<dbReference type="GO" id="GO:0009651">
    <property type="term" value="P:response to salt stress"/>
    <property type="evidence" value="ECO:0000270"/>
    <property type="project" value="UniProtKB"/>
</dbReference>
<dbReference type="InterPro" id="IPR005516">
    <property type="entry name" value="Remorin_C"/>
</dbReference>
<dbReference type="InterPro" id="IPR005518">
    <property type="entry name" value="Remorin_N"/>
</dbReference>
<dbReference type="PANTHER" id="PTHR31775">
    <property type="entry name" value="OS02G0117200 PROTEIN"/>
    <property type="match status" value="1"/>
</dbReference>
<dbReference type="PANTHER" id="PTHR31775:SF5">
    <property type="entry name" value="REMORIN 1.4"/>
    <property type="match status" value="1"/>
</dbReference>
<dbReference type="Pfam" id="PF03763">
    <property type="entry name" value="Remorin_C"/>
    <property type="match status" value="1"/>
</dbReference>
<dbReference type="Pfam" id="PF03766">
    <property type="entry name" value="Remorin_N"/>
    <property type="match status" value="1"/>
</dbReference>
<feature type="chain" id="PRO_0000445509" description="Remorin 1.4">
    <location>
        <begin position="1"/>
        <end position="202"/>
    </location>
</feature>
<feature type="region of interest" description="Disordered" evidence="2">
    <location>
        <begin position="1"/>
        <end position="79"/>
    </location>
</feature>
<feature type="coiled-coil region" evidence="1">
    <location>
        <begin position="123"/>
        <end position="169"/>
    </location>
</feature>
<feature type="compositionally biased region" description="Basic and acidic residues" evidence="2">
    <location>
        <begin position="1"/>
        <end position="10"/>
    </location>
</feature>
<feature type="compositionally biased region" description="Low complexity" evidence="2">
    <location>
        <begin position="25"/>
        <end position="39"/>
    </location>
</feature>
<feature type="compositionally biased region" description="Pro residues" evidence="2">
    <location>
        <begin position="40"/>
        <end position="50"/>
    </location>
</feature>
<feature type="compositionally biased region" description="Basic and acidic residues" evidence="2">
    <location>
        <begin position="68"/>
        <end position="79"/>
    </location>
</feature>
<feature type="splice variant" id="VSP_059892" description="In isoform 2.">
    <location>
        <position position="69"/>
    </location>
</feature>
<feature type="sequence conflict" description="In Ref. 4; AAM63910." evidence="5" ref="4">
    <original>Q</original>
    <variation>H</variation>
    <location>
        <position position="140"/>
    </location>
</feature>
<gene>
    <name evidence="4" type="primary">REM1.4</name>
    <name evidence="6" type="ordered locus">At5g23750</name>
    <name evidence="7" type="ORF">MRO11.21</name>
</gene>